<name>DEOC_YERPB</name>
<protein>
    <recommendedName>
        <fullName evidence="1">Deoxyribose-phosphate aldolase</fullName>
        <shortName evidence="1">DERA</shortName>
        <ecNumber evidence="1">4.1.2.4</ecNumber>
    </recommendedName>
    <alternativeName>
        <fullName evidence="1">2-deoxy-D-ribose 5-phosphate aldolase</fullName>
    </alternativeName>
    <alternativeName>
        <fullName evidence="1">Phosphodeoxyriboaldolase</fullName>
        <shortName evidence="1">Deoxyriboaldolase</shortName>
    </alternativeName>
</protein>
<gene>
    <name evidence="1" type="primary">deoC</name>
    <name type="ordered locus">YPTS_1451</name>
</gene>
<evidence type="ECO:0000255" key="1">
    <source>
        <dbReference type="HAMAP-Rule" id="MF_00114"/>
    </source>
</evidence>
<keyword id="KW-0963">Cytoplasm</keyword>
<keyword id="KW-0456">Lyase</keyword>
<keyword id="KW-0704">Schiff base</keyword>
<feature type="chain" id="PRO_1000094867" description="Deoxyribose-phosphate aldolase">
    <location>
        <begin position="1"/>
        <end position="223"/>
    </location>
</feature>
<feature type="active site" description="Proton donor/acceptor" evidence="1">
    <location>
        <position position="91"/>
    </location>
</feature>
<feature type="active site" description="Schiff-base intermediate with acetaldehyde" evidence="1">
    <location>
        <position position="153"/>
    </location>
</feature>
<feature type="active site" description="Proton donor/acceptor" evidence="1">
    <location>
        <position position="182"/>
    </location>
</feature>
<organism>
    <name type="scientific">Yersinia pseudotuberculosis serotype IB (strain PB1/+)</name>
    <dbReference type="NCBI Taxonomy" id="502801"/>
    <lineage>
        <taxon>Bacteria</taxon>
        <taxon>Pseudomonadati</taxon>
        <taxon>Pseudomonadota</taxon>
        <taxon>Gammaproteobacteria</taxon>
        <taxon>Enterobacterales</taxon>
        <taxon>Yersiniaceae</taxon>
        <taxon>Yersinia</taxon>
    </lineage>
</organism>
<accession>B2K9V8</accession>
<reference key="1">
    <citation type="submission" date="2008-04" db="EMBL/GenBank/DDBJ databases">
        <title>Complete sequence of Yersinia pseudotuberculosis PB1/+.</title>
        <authorList>
            <person name="Copeland A."/>
            <person name="Lucas S."/>
            <person name="Lapidus A."/>
            <person name="Glavina del Rio T."/>
            <person name="Dalin E."/>
            <person name="Tice H."/>
            <person name="Bruce D."/>
            <person name="Goodwin L."/>
            <person name="Pitluck S."/>
            <person name="Munk A.C."/>
            <person name="Brettin T."/>
            <person name="Detter J.C."/>
            <person name="Han C."/>
            <person name="Tapia R."/>
            <person name="Schmutz J."/>
            <person name="Larimer F."/>
            <person name="Land M."/>
            <person name="Hauser L."/>
            <person name="Challacombe J.F."/>
            <person name="Green L."/>
            <person name="Lindler L.E."/>
            <person name="Nikolich M.P."/>
            <person name="Richardson P."/>
        </authorList>
    </citation>
    <scope>NUCLEOTIDE SEQUENCE [LARGE SCALE GENOMIC DNA]</scope>
    <source>
        <strain>PB1/+</strain>
    </source>
</reference>
<comment type="function">
    <text evidence="1">Catalyzes a reversible aldol reaction between acetaldehyde and D-glyceraldehyde 3-phosphate to generate 2-deoxy-D-ribose 5-phosphate.</text>
</comment>
<comment type="catalytic activity">
    <reaction evidence="1">
        <text>2-deoxy-D-ribose 5-phosphate = D-glyceraldehyde 3-phosphate + acetaldehyde</text>
        <dbReference type="Rhea" id="RHEA:12821"/>
        <dbReference type="ChEBI" id="CHEBI:15343"/>
        <dbReference type="ChEBI" id="CHEBI:59776"/>
        <dbReference type="ChEBI" id="CHEBI:62877"/>
        <dbReference type="EC" id="4.1.2.4"/>
    </reaction>
</comment>
<comment type="pathway">
    <text evidence="1">Carbohydrate degradation; 2-deoxy-D-ribose 1-phosphate degradation; D-glyceraldehyde 3-phosphate and acetaldehyde from 2-deoxy-alpha-D-ribose 1-phosphate: step 2/2.</text>
</comment>
<comment type="subcellular location">
    <subcellularLocation>
        <location evidence="1">Cytoplasm</location>
    </subcellularLocation>
</comment>
<comment type="similarity">
    <text evidence="1">Belongs to the DeoC/FbaB aldolase family. DeoC type 1 subfamily.</text>
</comment>
<proteinExistence type="inferred from homology"/>
<sequence length="223" mass="23266">MTTNYAHYIDHTLLAMDATEAQIIKLCEEAKQHHFYAVCVNSGYVPVAAQQLAGSSVKVCSVIGFPLGAGLTAAKAFEAQAAINAGAQEIDMVINVGWLKSGKIADVKADIKAVRDNCAATPLKVILETCLLSDEQIVQVCEMCRELDVAFVKTSTGFSTGGAKEEHVKLMRATVGPVMGVKASGAVRDRATAETMIQAGATRIGTSSGVAIVSGQQAAASGY</sequence>
<dbReference type="EC" id="4.1.2.4" evidence="1"/>
<dbReference type="EMBL" id="CP001048">
    <property type="protein sequence ID" value="ACC88423.1"/>
    <property type="molecule type" value="Genomic_DNA"/>
</dbReference>
<dbReference type="RefSeq" id="WP_002208769.1">
    <property type="nucleotide sequence ID" value="NZ_CP009780.1"/>
</dbReference>
<dbReference type="SMR" id="B2K9V8"/>
<dbReference type="GeneID" id="57977455"/>
<dbReference type="KEGG" id="ypb:YPTS_1451"/>
<dbReference type="PATRIC" id="fig|502801.10.peg.810"/>
<dbReference type="UniPathway" id="UPA00002">
    <property type="reaction ID" value="UER00468"/>
</dbReference>
<dbReference type="GO" id="GO:0005737">
    <property type="term" value="C:cytoplasm"/>
    <property type="evidence" value="ECO:0007669"/>
    <property type="project" value="UniProtKB-SubCell"/>
</dbReference>
<dbReference type="GO" id="GO:0004139">
    <property type="term" value="F:deoxyribose-phosphate aldolase activity"/>
    <property type="evidence" value="ECO:0007669"/>
    <property type="project" value="UniProtKB-UniRule"/>
</dbReference>
<dbReference type="GO" id="GO:0006018">
    <property type="term" value="P:2-deoxyribose 1-phosphate catabolic process"/>
    <property type="evidence" value="ECO:0007669"/>
    <property type="project" value="UniProtKB-UniRule"/>
</dbReference>
<dbReference type="GO" id="GO:0016052">
    <property type="term" value="P:carbohydrate catabolic process"/>
    <property type="evidence" value="ECO:0007669"/>
    <property type="project" value="TreeGrafter"/>
</dbReference>
<dbReference type="GO" id="GO:0009264">
    <property type="term" value="P:deoxyribonucleotide catabolic process"/>
    <property type="evidence" value="ECO:0007669"/>
    <property type="project" value="InterPro"/>
</dbReference>
<dbReference type="CDD" id="cd00959">
    <property type="entry name" value="DeoC"/>
    <property type="match status" value="1"/>
</dbReference>
<dbReference type="FunFam" id="3.20.20.70:FF:000044">
    <property type="entry name" value="Deoxyribose-phosphate aldolase"/>
    <property type="match status" value="1"/>
</dbReference>
<dbReference type="Gene3D" id="3.20.20.70">
    <property type="entry name" value="Aldolase class I"/>
    <property type="match status" value="1"/>
</dbReference>
<dbReference type="HAMAP" id="MF_00114">
    <property type="entry name" value="DeoC_type1"/>
    <property type="match status" value="1"/>
</dbReference>
<dbReference type="InterPro" id="IPR013785">
    <property type="entry name" value="Aldolase_TIM"/>
</dbReference>
<dbReference type="InterPro" id="IPR011343">
    <property type="entry name" value="DeoC"/>
</dbReference>
<dbReference type="InterPro" id="IPR002915">
    <property type="entry name" value="DeoC/FbaB/LacD_aldolase"/>
</dbReference>
<dbReference type="InterPro" id="IPR028581">
    <property type="entry name" value="DeoC_typeI"/>
</dbReference>
<dbReference type="NCBIfam" id="TIGR00126">
    <property type="entry name" value="deoC"/>
    <property type="match status" value="1"/>
</dbReference>
<dbReference type="PANTHER" id="PTHR10889">
    <property type="entry name" value="DEOXYRIBOSE-PHOSPHATE ALDOLASE"/>
    <property type="match status" value="1"/>
</dbReference>
<dbReference type="PANTHER" id="PTHR10889:SF1">
    <property type="entry name" value="DEOXYRIBOSE-PHOSPHATE ALDOLASE"/>
    <property type="match status" value="1"/>
</dbReference>
<dbReference type="Pfam" id="PF01791">
    <property type="entry name" value="DeoC"/>
    <property type="match status" value="1"/>
</dbReference>
<dbReference type="PIRSF" id="PIRSF001357">
    <property type="entry name" value="DeoC"/>
    <property type="match status" value="1"/>
</dbReference>
<dbReference type="SMART" id="SM01133">
    <property type="entry name" value="DeoC"/>
    <property type="match status" value="1"/>
</dbReference>
<dbReference type="SUPFAM" id="SSF51569">
    <property type="entry name" value="Aldolase"/>
    <property type="match status" value="1"/>
</dbReference>